<name>3S11_PSECT</name>
<protein>
    <recommendedName>
        <fullName evidence="3">Alpha-elapitoxin-Pc1</fullName>
    </recommendedName>
</protein>
<accession>P0DXT0</accession>
<reference key="1">
    <citation type="journal article" date="2013" name="Toxicol. Lett.">
        <title>Species differences in the neuromuscular activity of post-synaptic neurotoxins from two Australian black snakes (Pseudechis porphyriacus and Pseudechis colletti).</title>
        <authorList>
            <person name="Hart A.J."/>
            <person name="Isbister G.K."/>
            <person name="O'Donnell P."/>
            <person name="Williamson N.A."/>
            <person name="Hodgson W.C."/>
        </authorList>
    </citation>
    <scope>PROTEIN SEQUENCE</scope>
    <scope>FUNCTION</scope>
    <scope>SUBCELLULAR LOCATION</scope>
    <source>
        <tissue>Venom</tissue>
    </source>
</reference>
<feature type="chain" id="PRO_0000461203" description="Alpha-elapitoxin-Pc1" evidence="2">
    <location>
        <begin position="1"/>
        <end position="62"/>
    </location>
</feature>
<feature type="disulfide bond" evidence="1">
    <location>
        <begin position="3"/>
        <end position="24"/>
    </location>
</feature>
<feature type="disulfide bond" evidence="1">
    <location>
        <begin position="17"/>
        <end position="41"/>
    </location>
</feature>
<feature type="disulfide bond" evidence="1">
    <location>
        <begin position="43"/>
        <end position="54"/>
    </location>
</feature>
<feature type="disulfide bond" evidence="1">
    <location>
        <begin position="55"/>
        <end position="60"/>
    </location>
</feature>
<dbReference type="SMR" id="P0DXT0"/>
<dbReference type="GO" id="GO:0005576">
    <property type="term" value="C:extracellular region"/>
    <property type="evidence" value="ECO:0007669"/>
    <property type="project" value="UniProtKB-SubCell"/>
</dbReference>
<dbReference type="GO" id="GO:0030550">
    <property type="term" value="F:acetylcholine receptor inhibitor activity"/>
    <property type="evidence" value="ECO:0007669"/>
    <property type="project" value="UniProtKB-KW"/>
</dbReference>
<dbReference type="GO" id="GO:0090729">
    <property type="term" value="F:toxin activity"/>
    <property type="evidence" value="ECO:0007669"/>
    <property type="project" value="UniProtKB-KW"/>
</dbReference>
<dbReference type="CDD" id="cd00206">
    <property type="entry name" value="TFP_snake_toxin"/>
    <property type="match status" value="1"/>
</dbReference>
<dbReference type="FunFam" id="2.10.60.10:FF:000024">
    <property type="entry name" value="Cytotoxin 1"/>
    <property type="match status" value="1"/>
</dbReference>
<dbReference type="Gene3D" id="2.10.60.10">
    <property type="entry name" value="CD59"/>
    <property type="match status" value="1"/>
</dbReference>
<dbReference type="InterPro" id="IPR003571">
    <property type="entry name" value="Snake_3FTx"/>
</dbReference>
<dbReference type="InterPro" id="IPR045860">
    <property type="entry name" value="Snake_toxin-like_sf"/>
</dbReference>
<dbReference type="InterPro" id="IPR018354">
    <property type="entry name" value="Snake_toxin_con_site"/>
</dbReference>
<dbReference type="InterPro" id="IPR054131">
    <property type="entry name" value="Toxin_cobra-type"/>
</dbReference>
<dbReference type="Pfam" id="PF21947">
    <property type="entry name" value="Toxin_cobra-type"/>
    <property type="match status" value="1"/>
</dbReference>
<dbReference type="SUPFAM" id="SSF57302">
    <property type="entry name" value="Snake toxin-like"/>
    <property type="match status" value="1"/>
</dbReference>
<proteinExistence type="evidence at protein level"/>
<evidence type="ECO:0000250" key="1">
    <source>
        <dbReference type="UniProtKB" id="P0C1Z0"/>
    </source>
</evidence>
<evidence type="ECO:0000269" key="2">
    <source>
    </source>
</evidence>
<evidence type="ECO:0000303" key="3">
    <source>
    </source>
</evidence>
<evidence type="ECO:0000305" key="4"/>
<evidence type="ECO:0000305" key="5">
    <source>
    </source>
</evidence>
<organism>
    <name type="scientific">Pseudechis colletti</name>
    <name type="common">Collett's snake</name>
    <dbReference type="NCBI Taxonomy" id="239754"/>
    <lineage>
        <taxon>Eukaryota</taxon>
        <taxon>Metazoa</taxon>
        <taxon>Chordata</taxon>
        <taxon>Craniata</taxon>
        <taxon>Vertebrata</taxon>
        <taxon>Euteleostomi</taxon>
        <taxon>Lepidosauria</taxon>
        <taxon>Squamata</taxon>
        <taxon>Bifurcata</taxon>
        <taxon>Unidentata</taxon>
        <taxon>Episquamata</taxon>
        <taxon>Toxicofera</taxon>
        <taxon>Serpentes</taxon>
        <taxon>Colubroidea</taxon>
        <taxon>Elapidae</taxon>
        <taxon>Hydrophiinae</taxon>
        <taxon>Pseudechis</taxon>
    </lineage>
</organism>
<comment type="function">
    <text evidence="2">Bird-specific neurotoxin (tested on chicken) that acts as pseudo-irreversible antagonists at the nicotinic acetylcholine receptor (nAChR) of the skeletal neuromuscular junction. Has no significant effect on the electrically-induced twitches of the rat isolated phrenic nerve-diaphragm preparation.</text>
</comment>
<comment type="subcellular location">
    <subcellularLocation>
        <location evidence="2">Secreted</location>
    </subcellularLocation>
</comment>
<comment type="tissue specificity">
    <text evidence="5">Expressed by the venom gland.</text>
</comment>
<comment type="similarity">
    <text evidence="4">Belongs to the three-finger toxin family. Short-chain subfamily. Type I alpha-neurotoxin sub-subfamily.</text>
</comment>
<keyword id="KW-0008">Acetylcholine receptor inhibiting toxin</keyword>
<keyword id="KW-0903">Direct protein sequencing</keyword>
<keyword id="KW-1015">Disulfide bond</keyword>
<keyword id="KW-0528">Neurotoxin</keyword>
<keyword id="KW-0629">Postsynaptic neurotoxin</keyword>
<keyword id="KW-0964">Secreted</keyword>
<keyword id="KW-0800">Toxin</keyword>
<sequence>MTCCNQQSSQPKTTTTCAGGETSCYKKTWSDHRGSRTERGCGCPHVKPGIKLTCCKTDECNN</sequence>